<proteinExistence type="inferred from homology"/>
<name>Y1808_SHEWM</name>
<organism>
    <name type="scientific">Shewanella woodyi (strain ATCC 51908 / MS32)</name>
    <dbReference type="NCBI Taxonomy" id="392500"/>
    <lineage>
        <taxon>Bacteria</taxon>
        <taxon>Pseudomonadati</taxon>
        <taxon>Pseudomonadota</taxon>
        <taxon>Gammaproteobacteria</taxon>
        <taxon>Alteromonadales</taxon>
        <taxon>Shewanellaceae</taxon>
        <taxon>Shewanella</taxon>
    </lineage>
</organism>
<dbReference type="EMBL" id="CP000961">
    <property type="protein sequence ID" value="ACA86092.1"/>
    <property type="molecule type" value="Genomic_DNA"/>
</dbReference>
<dbReference type="RefSeq" id="WP_012324438.1">
    <property type="nucleotide sequence ID" value="NC_010506.1"/>
</dbReference>
<dbReference type="SMR" id="B1KNL5"/>
<dbReference type="STRING" id="392500.Swoo_1808"/>
<dbReference type="ESTHER" id="shewm-y1808">
    <property type="family name" value="abh_upf00227"/>
</dbReference>
<dbReference type="KEGG" id="swd:Swoo_1808"/>
<dbReference type="eggNOG" id="COG3150">
    <property type="taxonomic scope" value="Bacteria"/>
</dbReference>
<dbReference type="HOGENOM" id="CLU_128769_0_0_6"/>
<dbReference type="Proteomes" id="UP000002168">
    <property type="component" value="Chromosome"/>
</dbReference>
<dbReference type="Gene3D" id="3.40.50.1820">
    <property type="entry name" value="alpha/beta hydrolase"/>
    <property type="match status" value="1"/>
</dbReference>
<dbReference type="HAMAP" id="MF_01047">
    <property type="entry name" value="UPF0227"/>
    <property type="match status" value="1"/>
</dbReference>
<dbReference type="InterPro" id="IPR029058">
    <property type="entry name" value="AB_hydrolase_fold"/>
</dbReference>
<dbReference type="InterPro" id="IPR022987">
    <property type="entry name" value="UPF0227"/>
</dbReference>
<dbReference type="InterPro" id="IPR008886">
    <property type="entry name" value="UPF0227/Esterase_YqiA"/>
</dbReference>
<dbReference type="NCBIfam" id="NF003431">
    <property type="entry name" value="PRK04940.1"/>
    <property type="match status" value="1"/>
</dbReference>
<dbReference type="PANTHER" id="PTHR35602">
    <property type="entry name" value="ESTERASE YQIA-RELATED"/>
    <property type="match status" value="1"/>
</dbReference>
<dbReference type="PANTHER" id="PTHR35602:SF2">
    <property type="entry name" value="UPF0227 PROTEIN YCFP"/>
    <property type="match status" value="1"/>
</dbReference>
<dbReference type="Pfam" id="PF05728">
    <property type="entry name" value="UPF0227"/>
    <property type="match status" value="1"/>
</dbReference>
<dbReference type="SUPFAM" id="SSF53474">
    <property type="entry name" value="alpha/beta-Hydrolases"/>
    <property type="match status" value="1"/>
</dbReference>
<reference key="1">
    <citation type="submission" date="2008-02" db="EMBL/GenBank/DDBJ databases">
        <title>Complete sequence of Shewanella woodyi ATCC 51908.</title>
        <authorList>
            <consortium name="US DOE Joint Genome Institute"/>
            <person name="Copeland A."/>
            <person name="Lucas S."/>
            <person name="Lapidus A."/>
            <person name="Glavina del Rio T."/>
            <person name="Dalin E."/>
            <person name="Tice H."/>
            <person name="Bruce D."/>
            <person name="Goodwin L."/>
            <person name="Pitluck S."/>
            <person name="Sims D."/>
            <person name="Brettin T."/>
            <person name="Detter J.C."/>
            <person name="Han C."/>
            <person name="Kuske C.R."/>
            <person name="Schmutz J."/>
            <person name="Larimer F."/>
            <person name="Land M."/>
            <person name="Hauser L."/>
            <person name="Kyrpides N."/>
            <person name="Lykidis A."/>
            <person name="Zhao J.-S."/>
            <person name="Richardson P."/>
        </authorList>
    </citation>
    <scope>NUCLEOTIDE SEQUENCE [LARGE SCALE GENOMIC DNA]</scope>
    <source>
        <strain>ATCC 51908 / MS32</strain>
    </source>
</reference>
<keyword id="KW-1185">Reference proteome</keyword>
<comment type="similarity">
    <text evidence="1">Belongs to the UPF0227 family.</text>
</comment>
<accession>B1KNL5</accession>
<feature type="chain" id="PRO_1000136202" description="UPF0227 protein Swoo_1808">
    <location>
        <begin position="1"/>
        <end position="179"/>
    </location>
</feature>
<protein>
    <recommendedName>
        <fullName evidence="1">UPF0227 protein Swoo_1808</fullName>
    </recommendedName>
</protein>
<gene>
    <name type="ordered locus">Swoo_1808</name>
</gene>
<sequence length="179" mass="20514">MILYLHGFDATSPGNHEKIRQLQFIDKDVRLLSYSTLHPKHDMQHLLNEVSKQLKLTDDSEPIIIGVGLGGYWAERIGYLNGLKSVLINPNLTPQDNMLGKIDRPEEYSDIANKCVSEFREKNSGKSLVILSRNDDTFDNQVVSDELSRFYEICWDEEQPHKFPVLASQLPRIQAFKKG</sequence>
<evidence type="ECO:0000255" key="1">
    <source>
        <dbReference type="HAMAP-Rule" id="MF_01047"/>
    </source>
</evidence>